<sequence>MKIAIGCDHIVTDTKMEVSQHLKSQGHEVIDVGTYDFTRTHYPIYGKKVGEKVASGEADLGVCICGTGVGISNAANKVPGVRTALVRDMTSALYSKEELNANVVSFGGKVAGELFIFDIVDAFIEAEYKPTEENKKLIAKINHLEAHNNDQADPHFFDEFLEKWNKGEYHD</sequence>
<protein>
    <recommendedName>
        <fullName evidence="1">Galactose-6-phosphate isomerase subunit LacB</fullName>
        <ecNumber evidence="1">5.3.1.26</ecNumber>
    </recommendedName>
</protein>
<comment type="catalytic activity">
    <reaction evidence="1">
        <text>aldehydo-D-galactose 6-phosphate = keto-D-tagatose 6-phosphate</text>
        <dbReference type="Rhea" id="RHEA:13033"/>
        <dbReference type="ChEBI" id="CHEBI:58255"/>
        <dbReference type="ChEBI" id="CHEBI:134283"/>
        <dbReference type="EC" id="5.3.1.26"/>
    </reaction>
</comment>
<comment type="pathway">
    <text evidence="1">Carbohydrate metabolism; D-galactose 6-phosphate degradation; D-tagatose 6-phosphate from D-galactose 6-phosphate: step 1/1.</text>
</comment>
<comment type="subunit">
    <text evidence="1">Heteromultimeric protein consisting of LacA and LacB.</text>
</comment>
<comment type="similarity">
    <text evidence="1">Belongs to the LacAB/RpiB family.</text>
</comment>
<proteinExistence type="inferred from homology"/>
<reference key="1">
    <citation type="journal article" date="2005" name="J. Bacteriol.">
        <title>Insights on evolution of virulence and resistance from the complete genome analysis of an early methicillin-resistant Staphylococcus aureus strain and a biofilm-producing methicillin-resistant Staphylococcus epidermidis strain.</title>
        <authorList>
            <person name="Gill S.R."/>
            <person name="Fouts D.E."/>
            <person name="Archer G.L."/>
            <person name="Mongodin E.F."/>
            <person name="DeBoy R.T."/>
            <person name="Ravel J."/>
            <person name="Paulsen I.T."/>
            <person name="Kolonay J.F."/>
            <person name="Brinkac L.M."/>
            <person name="Beanan M.J."/>
            <person name="Dodson R.J."/>
            <person name="Daugherty S.C."/>
            <person name="Madupu R."/>
            <person name="Angiuoli S.V."/>
            <person name="Durkin A.S."/>
            <person name="Haft D.H."/>
            <person name="Vamathevan J.J."/>
            <person name="Khouri H."/>
            <person name="Utterback T.R."/>
            <person name="Lee C."/>
            <person name="Dimitrov G."/>
            <person name="Jiang L."/>
            <person name="Qin H."/>
            <person name="Weidman J."/>
            <person name="Tran K."/>
            <person name="Kang K.H."/>
            <person name="Hance I.R."/>
            <person name="Nelson K.E."/>
            <person name="Fraser C.M."/>
        </authorList>
    </citation>
    <scope>NUCLEOTIDE SEQUENCE [LARGE SCALE GENOMIC DNA]</scope>
    <source>
        <strain>ATCC 35984 / DSM 28319 / BCRC 17069 / CCUG 31568 / BM 3577 / RP62A</strain>
    </source>
</reference>
<organism>
    <name type="scientific">Staphylococcus epidermidis (strain ATCC 35984 / DSM 28319 / BCRC 17069 / CCUG 31568 / BM 3577 / RP62A)</name>
    <dbReference type="NCBI Taxonomy" id="176279"/>
    <lineage>
        <taxon>Bacteria</taxon>
        <taxon>Bacillati</taxon>
        <taxon>Bacillota</taxon>
        <taxon>Bacilli</taxon>
        <taxon>Bacillales</taxon>
        <taxon>Staphylococcaceae</taxon>
        <taxon>Staphylococcus</taxon>
    </lineage>
</organism>
<dbReference type="EC" id="5.3.1.26" evidence="1"/>
<dbReference type="EMBL" id="CP000029">
    <property type="protein sequence ID" value="AAW55179.1"/>
    <property type="molecule type" value="Genomic_DNA"/>
</dbReference>
<dbReference type="RefSeq" id="WP_001829777.1">
    <property type="nucleotide sequence ID" value="NC_002976.3"/>
</dbReference>
<dbReference type="SMR" id="Q5HM36"/>
<dbReference type="STRING" id="176279.SERP1794"/>
<dbReference type="GeneID" id="50018110"/>
<dbReference type="KEGG" id="ser:SERP1794"/>
<dbReference type="eggNOG" id="COG0698">
    <property type="taxonomic scope" value="Bacteria"/>
</dbReference>
<dbReference type="HOGENOM" id="CLU_091396_2_0_9"/>
<dbReference type="UniPathway" id="UPA00702">
    <property type="reaction ID" value="UER00714"/>
</dbReference>
<dbReference type="Proteomes" id="UP000000531">
    <property type="component" value="Chromosome"/>
</dbReference>
<dbReference type="GO" id="GO:0050044">
    <property type="term" value="F:galactose-6-phosphate isomerase activity"/>
    <property type="evidence" value="ECO:0007669"/>
    <property type="project" value="UniProtKB-UniRule"/>
</dbReference>
<dbReference type="GO" id="GO:0004751">
    <property type="term" value="F:ribose-5-phosphate isomerase activity"/>
    <property type="evidence" value="ECO:0007669"/>
    <property type="project" value="TreeGrafter"/>
</dbReference>
<dbReference type="GO" id="GO:0019316">
    <property type="term" value="P:D-allose catabolic process"/>
    <property type="evidence" value="ECO:0007669"/>
    <property type="project" value="TreeGrafter"/>
</dbReference>
<dbReference type="GO" id="GO:0019388">
    <property type="term" value="P:galactose catabolic process"/>
    <property type="evidence" value="ECO:0007669"/>
    <property type="project" value="UniProtKB-UniPathway"/>
</dbReference>
<dbReference type="GO" id="GO:0019512">
    <property type="term" value="P:lactose catabolic process via tagatose-6-phosphate"/>
    <property type="evidence" value="ECO:0007669"/>
    <property type="project" value="UniProtKB-UniRule"/>
</dbReference>
<dbReference type="GO" id="GO:0009052">
    <property type="term" value="P:pentose-phosphate shunt, non-oxidative branch"/>
    <property type="evidence" value="ECO:0007669"/>
    <property type="project" value="TreeGrafter"/>
</dbReference>
<dbReference type="Gene3D" id="3.40.1400.10">
    <property type="entry name" value="Sugar-phosphate isomerase, RpiB/LacA/LacB"/>
    <property type="match status" value="1"/>
</dbReference>
<dbReference type="HAMAP" id="MF_01556">
    <property type="entry name" value="LacB"/>
    <property type="match status" value="1"/>
</dbReference>
<dbReference type="InterPro" id="IPR004784">
    <property type="entry name" value="LacB"/>
</dbReference>
<dbReference type="InterPro" id="IPR003500">
    <property type="entry name" value="RpiB_LacA_LacB"/>
</dbReference>
<dbReference type="InterPro" id="IPR036569">
    <property type="entry name" value="RpiB_LacA_LacB_sf"/>
</dbReference>
<dbReference type="NCBIfam" id="TIGR01119">
    <property type="entry name" value="lacB"/>
    <property type="match status" value="1"/>
</dbReference>
<dbReference type="NCBIfam" id="NF004051">
    <property type="entry name" value="PRK05571.1"/>
    <property type="match status" value="1"/>
</dbReference>
<dbReference type="NCBIfam" id="NF006381">
    <property type="entry name" value="PRK08622.1"/>
    <property type="match status" value="1"/>
</dbReference>
<dbReference type="NCBIfam" id="TIGR00689">
    <property type="entry name" value="rpiB_lacA_lacB"/>
    <property type="match status" value="1"/>
</dbReference>
<dbReference type="PANTHER" id="PTHR30345:SF0">
    <property type="entry name" value="DNA DAMAGE-REPAIR_TOLERATION PROTEIN DRT102"/>
    <property type="match status" value="1"/>
</dbReference>
<dbReference type="PANTHER" id="PTHR30345">
    <property type="entry name" value="RIBOSE-5-PHOSPHATE ISOMERASE B"/>
    <property type="match status" value="1"/>
</dbReference>
<dbReference type="Pfam" id="PF02502">
    <property type="entry name" value="LacAB_rpiB"/>
    <property type="match status" value="1"/>
</dbReference>
<dbReference type="PIRSF" id="PIRSF005384">
    <property type="entry name" value="RpiB_LacA_B"/>
    <property type="match status" value="1"/>
</dbReference>
<dbReference type="SUPFAM" id="SSF89623">
    <property type="entry name" value="Ribose/Galactose isomerase RpiB/AlsB"/>
    <property type="match status" value="1"/>
</dbReference>
<feature type="chain" id="PRO_0000208144" description="Galactose-6-phosphate isomerase subunit LacB">
    <location>
        <begin position="1"/>
        <end position="171"/>
    </location>
</feature>
<keyword id="KW-0413">Isomerase</keyword>
<keyword id="KW-0423">Lactose metabolism</keyword>
<keyword id="KW-1185">Reference proteome</keyword>
<gene>
    <name evidence="1" type="primary">lacB</name>
    <name type="ordered locus">SERP1794</name>
</gene>
<accession>Q5HM36</accession>
<name>LACB_STAEQ</name>
<evidence type="ECO:0000255" key="1">
    <source>
        <dbReference type="HAMAP-Rule" id="MF_01556"/>
    </source>
</evidence>